<dbReference type="EC" id="2.1.1.-"/>
<dbReference type="EMBL" id="L03520">
    <property type="protein sequence ID" value="AAA72292.1"/>
    <property type="molecule type" value="Genomic_DNA"/>
</dbReference>
<dbReference type="PIR" id="S28438">
    <property type="entry name" value="S28438"/>
</dbReference>
<dbReference type="SMR" id="Q02007"/>
<dbReference type="GO" id="GO:0008757">
    <property type="term" value="F:S-adenosylmethionine-dependent methyltransferase activity"/>
    <property type="evidence" value="ECO:0007669"/>
    <property type="project" value="InterPro"/>
</dbReference>
<dbReference type="GO" id="GO:0032259">
    <property type="term" value="P:methylation"/>
    <property type="evidence" value="ECO:0007669"/>
    <property type="project" value="UniProtKB-KW"/>
</dbReference>
<dbReference type="GO" id="GO:0009312">
    <property type="term" value="P:oligosaccharide biosynthetic process"/>
    <property type="evidence" value="ECO:0007669"/>
    <property type="project" value="InterPro"/>
</dbReference>
<dbReference type="Gene3D" id="3.40.50.150">
    <property type="entry name" value="Vaccinia Virus protein VP39"/>
    <property type="match status" value="1"/>
</dbReference>
<dbReference type="InterPro" id="IPR020944">
    <property type="entry name" value="NodS"/>
</dbReference>
<dbReference type="InterPro" id="IPR029063">
    <property type="entry name" value="SAM-dependent_MTases_sf"/>
</dbReference>
<dbReference type="InterPro" id="IPR008715">
    <property type="entry name" value="SAM-MeTfrase_NodS-like"/>
</dbReference>
<dbReference type="Pfam" id="PF05401">
    <property type="entry name" value="NodS"/>
    <property type="match status" value="1"/>
</dbReference>
<dbReference type="PIRSF" id="PIRSF009310">
    <property type="entry name" value="NodS"/>
    <property type="match status" value="1"/>
</dbReference>
<dbReference type="SUPFAM" id="SSF53335">
    <property type="entry name" value="S-adenosyl-L-methionine-dependent methyltransferases"/>
    <property type="match status" value="1"/>
</dbReference>
<evidence type="ECO:0000305" key="1"/>
<feature type="chain" id="PRO_0000096914" description="Nodulation protein S">
    <location>
        <begin position="1"/>
        <end position="175"/>
    </location>
</feature>
<protein>
    <recommendedName>
        <fullName>Nodulation protein S</fullName>
        <ecNumber>2.1.1.-</ecNumber>
    </recommendedName>
</protein>
<organism>
    <name type="scientific">Rhizobium fredii</name>
    <name type="common">Sinorhizobium fredii</name>
    <dbReference type="NCBI Taxonomy" id="380"/>
    <lineage>
        <taxon>Bacteria</taxon>
        <taxon>Pseudomonadati</taxon>
        <taxon>Pseudomonadota</taxon>
        <taxon>Alphaproteobacteria</taxon>
        <taxon>Hyphomicrobiales</taxon>
        <taxon>Rhizobiaceae</taxon>
        <taxon>Sinorhizobium/Ensifer group</taxon>
        <taxon>Sinorhizobium</taxon>
    </lineage>
</organism>
<name>NODS_RHIFR</name>
<accession>Q02007</accession>
<reference key="1">
    <citation type="journal article" date="1992" name="Mol. Microbiol.">
        <title>Differential expression of nodS accounts for the varied abilities of Rhizobium fredii USDA257 and Rhizobium sp. strain NGR234 to nodulate Leucaena spp.</title>
        <authorList>
            <person name="Krishnan H.B."/>
            <person name="Lewin A."/>
            <person name="Fellay R."/>
            <person name="Broughton W.J."/>
            <person name="Pueppke S.G."/>
        </authorList>
    </citation>
    <scope>NUCLEOTIDE SEQUENCE [GENOMIC DNA]</scope>
    <source>
        <strain>USDA 257</strain>
    </source>
</reference>
<keyword id="KW-0489">Methyltransferase</keyword>
<keyword id="KW-0536">Nodulation</keyword>
<keyword id="KW-0808">Transferase</keyword>
<proteinExistence type="inferred from homology"/>
<gene>
    <name type="primary">nodS</name>
</gene>
<comment type="function">
    <text>SAM-utilizing methyltransferase involved in nod factor synthesis.</text>
</comment>
<comment type="similarity">
    <text evidence="1">Belongs to the NodS family.</text>
</comment>
<sequence>MRSSRSDIRRCFGCRFPKVLSPTHSKSGARPAIHGKLAPYCKRLTVIDVVPRAIARTRQRMKESSHINWIVADVRQFSTQQLFDLIVVAEVLYYLEDVAAIRTAVHNLVSMLAPSGHMVFGSAIDANCRRWGHVAGTETVIAMLNETLIEVEQLYCRGASVNEDCLLSRFQKSTT</sequence>